<gene>
    <name type="primary">Ap3s2</name>
</gene>
<sequence>MIQAILVFNNHGKPRLVRFYQRFPEEIQQQIVRETFHLVLKRDDNICNFLEGGSLIGGSDYKLIYRHYATLYFVFCVDSSESELGILDLIQVFVETLDKCFENVCELDLIFHMDKVHYILQEVVMGGMVLETNMNEIVAQIEAQNRLEKSEGGLSAAPARAVSAVKNINLPEIPRNINIGDLNIKVPNLSQFV</sequence>
<organism>
    <name type="scientific">Mus musculus</name>
    <name type="common">Mouse</name>
    <dbReference type="NCBI Taxonomy" id="10090"/>
    <lineage>
        <taxon>Eukaryota</taxon>
        <taxon>Metazoa</taxon>
        <taxon>Chordata</taxon>
        <taxon>Craniata</taxon>
        <taxon>Vertebrata</taxon>
        <taxon>Euteleostomi</taxon>
        <taxon>Mammalia</taxon>
        <taxon>Eutheria</taxon>
        <taxon>Euarchontoglires</taxon>
        <taxon>Glires</taxon>
        <taxon>Rodentia</taxon>
        <taxon>Myomorpha</taxon>
        <taxon>Muroidea</taxon>
        <taxon>Muridae</taxon>
        <taxon>Murinae</taxon>
        <taxon>Mus</taxon>
        <taxon>Mus</taxon>
    </lineage>
</organism>
<comment type="function">
    <text evidence="3">Part of the AP-3 complex, an adaptor-related complex which is not clathrin-associated. The complex is associated with the Golgi region as well as more peripheral structures. It facilitates the budding of vesicles from the Golgi membrane and may be directly involved in trafficking to lysosomes. In concert with the BLOC-1 complex, AP-3 is required to target cargos into vesicles assembled at cell bodies for delivery into neurites and nerve terminals.</text>
</comment>
<comment type="subunit">
    <text evidence="1 2">Adaptor protein complex 3 (AP-3) is a heterotetramer composed of two large adaptins (delta-type subunit AP3D1 and beta-type subunit AP3B1 or AP3B2), a medium adaptin (mu-type subunit AP3M1 or AP3M2) and a small adaptin (sigma-type subunit APS1 or AP3S2) (By similarity). AP-3 associates with the BLOC-1 complex. Interacts with AGAP1.</text>
</comment>
<comment type="subcellular location">
    <subcellularLocation>
        <location>Golgi apparatus</location>
    </subcellularLocation>
    <subcellularLocation>
        <location evidence="1">Cytoplasmic vesicle membrane</location>
        <topology evidence="1">Peripheral membrane protein</topology>
        <orientation evidence="1">Cytoplasmic side</orientation>
    </subcellularLocation>
    <text evidence="1">Component of the coat surrounding the cytoplasmic face of coated vesicles located at the Golgi complex.</text>
</comment>
<comment type="tissue specificity">
    <text>Present in all adult tissues examined.</text>
</comment>
<comment type="similarity">
    <text evidence="4">Belongs to the adaptor complexes small subunit family.</text>
</comment>
<dbReference type="EMBL" id="U91933">
    <property type="protein sequence ID" value="AAD03780.1"/>
    <property type="molecule type" value="mRNA"/>
</dbReference>
<dbReference type="EMBL" id="AK028372">
    <property type="protein sequence ID" value="BAC25912.1"/>
    <property type="molecule type" value="mRNA"/>
</dbReference>
<dbReference type="EMBL" id="AK037336">
    <property type="protein sequence ID" value="BAC29788.1"/>
    <property type="molecule type" value="mRNA"/>
</dbReference>
<dbReference type="EMBL" id="AK150085">
    <property type="protein sequence ID" value="BAE29294.1"/>
    <property type="molecule type" value="mRNA"/>
</dbReference>
<dbReference type="CCDS" id="CCDS21389.1"/>
<dbReference type="RefSeq" id="NP_033812.3">
    <property type="nucleotide sequence ID" value="NM_009682.3"/>
</dbReference>
<dbReference type="SMR" id="Q8BSZ2"/>
<dbReference type="ComplexPortal" id="CPX-5146">
    <property type="entry name" value="Ubiquitous AP-3 Adaptor complex, sigma3b variant"/>
</dbReference>
<dbReference type="ComplexPortal" id="CPX-5148">
    <property type="entry name" value="Neuronal AP-3 Adaptor complex, sigma3b variant"/>
</dbReference>
<dbReference type="CORUM" id="Q8BSZ2"/>
<dbReference type="FunCoup" id="Q8BSZ2">
    <property type="interactions" value="2143"/>
</dbReference>
<dbReference type="IntAct" id="Q8BSZ2">
    <property type="interactions" value="1"/>
</dbReference>
<dbReference type="MINT" id="Q8BSZ2"/>
<dbReference type="STRING" id="10090.ENSMUSP00000075082"/>
<dbReference type="iPTMnet" id="Q8BSZ2"/>
<dbReference type="PhosphoSitePlus" id="Q8BSZ2"/>
<dbReference type="PaxDb" id="10090-ENSMUSP00000075082"/>
<dbReference type="Pumba" id="Q8BSZ2"/>
<dbReference type="Antibodypedia" id="34959">
    <property type="antibodies" value="92 antibodies from 25 providers"/>
</dbReference>
<dbReference type="DNASU" id="11778"/>
<dbReference type="Ensembl" id="ENSMUST00000075657.8">
    <property type="protein sequence ID" value="ENSMUSP00000075082.7"/>
    <property type="gene ID" value="ENSMUSG00000063801.8"/>
</dbReference>
<dbReference type="GeneID" id="11778"/>
<dbReference type="KEGG" id="mmu:11778"/>
<dbReference type="UCSC" id="uc009hzf.2">
    <property type="organism name" value="mouse"/>
</dbReference>
<dbReference type="AGR" id="MGI:1337060"/>
<dbReference type="CTD" id="10239"/>
<dbReference type="MGI" id="MGI:1337060">
    <property type="gene designation" value="Ap3s2"/>
</dbReference>
<dbReference type="VEuPathDB" id="HostDB:ENSMUSG00000063801"/>
<dbReference type="eggNOG" id="KOG0936">
    <property type="taxonomic scope" value="Eukaryota"/>
</dbReference>
<dbReference type="GeneTree" id="ENSGT00970000193421"/>
<dbReference type="HOGENOM" id="CLU_061221_2_2_1"/>
<dbReference type="InParanoid" id="Q8BSZ2"/>
<dbReference type="OMA" id="MNDQGKP"/>
<dbReference type="OrthoDB" id="10261046at2759"/>
<dbReference type="PhylomeDB" id="Q8BSZ2"/>
<dbReference type="TreeFam" id="TF300189"/>
<dbReference type="BioGRID-ORCS" id="11778">
    <property type="hits" value="0 hits in 77 CRISPR screens"/>
</dbReference>
<dbReference type="CD-CODE" id="CE726F99">
    <property type="entry name" value="Postsynaptic density"/>
</dbReference>
<dbReference type="ChiTaRS" id="Ap3s2">
    <property type="organism name" value="mouse"/>
</dbReference>
<dbReference type="PRO" id="PR:Q8BSZ2"/>
<dbReference type="Proteomes" id="UP000000589">
    <property type="component" value="Chromosome 7"/>
</dbReference>
<dbReference type="RNAct" id="Q8BSZ2">
    <property type="molecule type" value="protein"/>
</dbReference>
<dbReference type="Bgee" id="ENSMUSG00000063801">
    <property type="expression patterns" value="Expressed in cortical plate and 263 other cell types or tissues"/>
</dbReference>
<dbReference type="ExpressionAtlas" id="Q8BSZ2">
    <property type="expression patterns" value="baseline and differential"/>
</dbReference>
<dbReference type="GO" id="GO:0030123">
    <property type="term" value="C:AP-3 adaptor complex"/>
    <property type="evidence" value="ECO:0000303"/>
    <property type="project" value="ComplexPortal"/>
</dbReference>
<dbReference type="GO" id="GO:1904115">
    <property type="term" value="C:axon cytoplasm"/>
    <property type="evidence" value="ECO:0007669"/>
    <property type="project" value="GOC"/>
</dbReference>
<dbReference type="GO" id="GO:0030659">
    <property type="term" value="C:cytoplasmic vesicle membrane"/>
    <property type="evidence" value="ECO:0007669"/>
    <property type="project" value="UniProtKB-SubCell"/>
</dbReference>
<dbReference type="GO" id="GO:0005769">
    <property type="term" value="C:early endosome"/>
    <property type="evidence" value="ECO:0000303"/>
    <property type="project" value="ComplexPortal"/>
</dbReference>
<dbReference type="GO" id="GO:0008021">
    <property type="term" value="C:synaptic vesicle"/>
    <property type="evidence" value="ECO:0007669"/>
    <property type="project" value="Ensembl"/>
</dbReference>
<dbReference type="GO" id="GO:0005802">
    <property type="term" value="C:trans-Golgi network"/>
    <property type="evidence" value="ECO:0000304"/>
    <property type="project" value="MGI"/>
</dbReference>
<dbReference type="GO" id="GO:0008089">
    <property type="term" value="P:anterograde axonal transport"/>
    <property type="evidence" value="ECO:0000315"/>
    <property type="project" value="UniProtKB"/>
</dbReference>
<dbReference type="GO" id="GO:0048490">
    <property type="term" value="P:anterograde synaptic vesicle transport"/>
    <property type="evidence" value="ECO:0000315"/>
    <property type="project" value="UniProtKB"/>
</dbReference>
<dbReference type="GO" id="GO:0035654">
    <property type="term" value="P:clathrin-coated vesicle cargo loading, AP-3-mediated"/>
    <property type="evidence" value="ECO:0000303"/>
    <property type="project" value="ComplexPortal"/>
</dbReference>
<dbReference type="GO" id="GO:0006896">
    <property type="term" value="P:Golgi to vacuole transport"/>
    <property type="evidence" value="ECO:0007669"/>
    <property type="project" value="InterPro"/>
</dbReference>
<dbReference type="GO" id="GO:0006886">
    <property type="term" value="P:intracellular protein transport"/>
    <property type="evidence" value="ECO:0000304"/>
    <property type="project" value="MGI"/>
</dbReference>
<dbReference type="GO" id="GO:0046907">
    <property type="term" value="P:intracellular transport"/>
    <property type="evidence" value="ECO:0000303"/>
    <property type="project" value="ComplexPortal"/>
</dbReference>
<dbReference type="GO" id="GO:1903232">
    <property type="term" value="P:melanosome assembly"/>
    <property type="evidence" value="ECO:0000303"/>
    <property type="project" value="ComplexPortal"/>
</dbReference>
<dbReference type="GO" id="GO:0060155">
    <property type="term" value="P:platelet dense granule organization"/>
    <property type="evidence" value="ECO:0000303"/>
    <property type="project" value="ComplexPortal"/>
</dbReference>
<dbReference type="GO" id="GO:0016183">
    <property type="term" value="P:synaptic vesicle coating"/>
    <property type="evidence" value="ECO:0000303"/>
    <property type="project" value="ComplexPortal"/>
</dbReference>
<dbReference type="GO" id="GO:0036465">
    <property type="term" value="P:synaptic vesicle recycling"/>
    <property type="evidence" value="ECO:0000303"/>
    <property type="project" value="ComplexPortal"/>
</dbReference>
<dbReference type="GO" id="GO:0016192">
    <property type="term" value="P:vesicle-mediated transport"/>
    <property type="evidence" value="ECO:0000304"/>
    <property type="project" value="MGI"/>
</dbReference>
<dbReference type="CDD" id="cd14834">
    <property type="entry name" value="AP3_sigma"/>
    <property type="match status" value="1"/>
</dbReference>
<dbReference type="FunFam" id="3.30.450.60:FF:000001">
    <property type="entry name" value="AP complex subunit sigma"/>
    <property type="match status" value="1"/>
</dbReference>
<dbReference type="Gene3D" id="3.30.450.60">
    <property type="match status" value="1"/>
</dbReference>
<dbReference type="InterPro" id="IPR016635">
    <property type="entry name" value="AP_complex_ssu"/>
</dbReference>
<dbReference type="InterPro" id="IPR022775">
    <property type="entry name" value="AP_mu_sigma_su"/>
</dbReference>
<dbReference type="InterPro" id="IPR027155">
    <property type="entry name" value="APS3"/>
</dbReference>
<dbReference type="InterPro" id="IPR000804">
    <property type="entry name" value="Clathrin_sm-chain_CS"/>
</dbReference>
<dbReference type="InterPro" id="IPR011012">
    <property type="entry name" value="Longin-like_dom_sf"/>
</dbReference>
<dbReference type="PANTHER" id="PTHR11753">
    <property type="entry name" value="ADAPTOR COMPLEXES SMALL SUBUNIT FAMILY"/>
    <property type="match status" value="1"/>
</dbReference>
<dbReference type="Pfam" id="PF01217">
    <property type="entry name" value="Clat_adaptor_s"/>
    <property type="match status" value="1"/>
</dbReference>
<dbReference type="SUPFAM" id="SSF64356">
    <property type="entry name" value="SNARE-like"/>
    <property type="match status" value="1"/>
</dbReference>
<dbReference type="PROSITE" id="PS00989">
    <property type="entry name" value="CLAT_ADAPTOR_S"/>
    <property type="match status" value="1"/>
</dbReference>
<proteinExistence type="evidence at protein level"/>
<feature type="chain" id="PRO_0000193818" description="AP-3 complex subunit sigma-2">
    <location>
        <begin position="1"/>
        <end position="193"/>
    </location>
</feature>
<feature type="sequence conflict" description="In Ref. 2; BAC29788." evidence="4" ref="2">
    <original>E</original>
    <variation>A</variation>
    <location>
        <position position="131"/>
    </location>
</feature>
<evidence type="ECO:0000250" key="1"/>
<evidence type="ECO:0000269" key="2">
    <source>
    </source>
</evidence>
<evidence type="ECO:0000269" key="3">
    <source>
    </source>
</evidence>
<evidence type="ECO:0000305" key="4"/>
<name>AP3S2_MOUSE</name>
<protein>
    <recommendedName>
        <fullName>AP-3 complex subunit sigma-2</fullName>
    </recommendedName>
    <alternativeName>
        <fullName>AP-3 complex subunit sigma-3B</fullName>
    </alternativeName>
    <alternativeName>
        <fullName>Adaptor-related protein complex 3 subunit sigma-2</fullName>
    </alternativeName>
    <alternativeName>
        <fullName>Sigma-3B-adaptin</fullName>
        <shortName>Sigma3B-adaptin</shortName>
    </alternativeName>
    <alternativeName>
        <fullName>Sigma-adaptin 3b</fullName>
    </alternativeName>
</protein>
<keyword id="KW-0968">Cytoplasmic vesicle</keyword>
<keyword id="KW-0333">Golgi apparatus</keyword>
<keyword id="KW-0472">Membrane</keyword>
<keyword id="KW-0653">Protein transport</keyword>
<keyword id="KW-1185">Reference proteome</keyword>
<keyword id="KW-0813">Transport</keyword>
<accession>Q8BSZ2</accession>
<accession>O09077</accession>
<accession>O09149</accession>
<accession>Q3UDG7</accession>
<accession>Q8CAY1</accession>
<accession>Q99589</accession>
<reference key="1">
    <citation type="journal article" date="1997" name="J. Cell Biol.">
        <title>Characterization of the adaptor-related protein complex, AP-3.</title>
        <authorList>
            <person name="Simpson F."/>
            <person name="Peden A.A."/>
            <person name="Christopoulou L."/>
            <person name="Robinson M.S."/>
        </authorList>
    </citation>
    <scope>NUCLEOTIDE SEQUENCE [MRNA]</scope>
    <source>
        <tissue>Brain</tissue>
    </source>
</reference>
<reference key="2">
    <citation type="journal article" date="2005" name="Science">
        <title>The transcriptional landscape of the mammalian genome.</title>
        <authorList>
            <person name="Carninci P."/>
            <person name="Kasukawa T."/>
            <person name="Katayama S."/>
            <person name="Gough J."/>
            <person name="Frith M.C."/>
            <person name="Maeda N."/>
            <person name="Oyama R."/>
            <person name="Ravasi T."/>
            <person name="Lenhard B."/>
            <person name="Wells C."/>
            <person name="Kodzius R."/>
            <person name="Shimokawa K."/>
            <person name="Bajic V.B."/>
            <person name="Brenner S.E."/>
            <person name="Batalov S."/>
            <person name="Forrest A.R."/>
            <person name="Zavolan M."/>
            <person name="Davis M.J."/>
            <person name="Wilming L.G."/>
            <person name="Aidinis V."/>
            <person name="Allen J.E."/>
            <person name="Ambesi-Impiombato A."/>
            <person name="Apweiler R."/>
            <person name="Aturaliya R.N."/>
            <person name="Bailey T.L."/>
            <person name="Bansal M."/>
            <person name="Baxter L."/>
            <person name="Beisel K.W."/>
            <person name="Bersano T."/>
            <person name="Bono H."/>
            <person name="Chalk A.M."/>
            <person name="Chiu K.P."/>
            <person name="Choudhary V."/>
            <person name="Christoffels A."/>
            <person name="Clutterbuck D.R."/>
            <person name="Crowe M.L."/>
            <person name="Dalla E."/>
            <person name="Dalrymple B.P."/>
            <person name="de Bono B."/>
            <person name="Della Gatta G."/>
            <person name="di Bernardo D."/>
            <person name="Down T."/>
            <person name="Engstrom P."/>
            <person name="Fagiolini M."/>
            <person name="Faulkner G."/>
            <person name="Fletcher C.F."/>
            <person name="Fukushima T."/>
            <person name="Furuno M."/>
            <person name="Futaki S."/>
            <person name="Gariboldi M."/>
            <person name="Georgii-Hemming P."/>
            <person name="Gingeras T.R."/>
            <person name="Gojobori T."/>
            <person name="Green R.E."/>
            <person name="Gustincich S."/>
            <person name="Harbers M."/>
            <person name="Hayashi Y."/>
            <person name="Hensch T.K."/>
            <person name="Hirokawa N."/>
            <person name="Hill D."/>
            <person name="Huminiecki L."/>
            <person name="Iacono M."/>
            <person name="Ikeo K."/>
            <person name="Iwama A."/>
            <person name="Ishikawa T."/>
            <person name="Jakt M."/>
            <person name="Kanapin A."/>
            <person name="Katoh M."/>
            <person name="Kawasawa Y."/>
            <person name="Kelso J."/>
            <person name="Kitamura H."/>
            <person name="Kitano H."/>
            <person name="Kollias G."/>
            <person name="Krishnan S.P."/>
            <person name="Kruger A."/>
            <person name="Kummerfeld S.K."/>
            <person name="Kurochkin I.V."/>
            <person name="Lareau L.F."/>
            <person name="Lazarevic D."/>
            <person name="Lipovich L."/>
            <person name="Liu J."/>
            <person name="Liuni S."/>
            <person name="McWilliam S."/>
            <person name="Madan Babu M."/>
            <person name="Madera M."/>
            <person name="Marchionni L."/>
            <person name="Matsuda H."/>
            <person name="Matsuzawa S."/>
            <person name="Miki H."/>
            <person name="Mignone F."/>
            <person name="Miyake S."/>
            <person name="Morris K."/>
            <person name="Mottagui-Tabar S."/>
            <person name="Mulder N."/>
            <person name="Nakano N."/>
            <person name="Nakauchi H."/>
            <person name="Ng P."/>
            <person name="Nilsson R."/>
            <person name="Nishiguchi S."/>
            <person name="Nishikawa S."/>
            <person name="Nori F."/>
            <person name="Ohara O."/>
            <person name="Okazaki Y."/>
            <person name="Orlando V."/>
            <person name="Pang K.C."/>
            <person name="Pavan W.J."/>
            <person name="Pavesi G."/>
            <person name="Pesole G."/>
            <person name="Petrovsky N."/>
            <person name="Piazza S."/>
            <person name="Reed J."/>
            <person name="Reid J.F."/>
            <person name="Ring B.Z."/>
            <person name="Ringwald M."/>
            <person name="Rost B."/>
            <person name="Ruan Y."/>
            <person name="Salzberg S.L."/>
            <person name="Sandelin A."/>
            <person name="Schneider C."/>
            <person name="Schoenbach C."/>
            <person name="Sekiguchi K."/>
            <person name="Semple C.A."/>
            <person name="Seno S."/>
            <person name="Sessa L."/>
            <person name="Sheng Y."/>
            <person name="Shibata Y."/>
            <person name="Shimada H."/>
            <person name="Shimada K."/>
            <person name="Silva D."/>
            <person name="Sinclair B."/>
            <person name="Sperling S."/>
            <person name="Stupka E."/>
            <person name="Sugiura K."/>
            <person name="Sultana R."/>
            <person name="Takenaka Y."/>
            <person name="Taki K."/>
            <person name="Tammoja K."/>
            <person name="Tan S.L."/>
            <person name="Tang S."/>
            <person name="Taylor M.S."/>
            <person name="Tegner J."/>
            <person name="Teichmann S.A."/>
            <person name="Ueda H.R."/>
            <person name="van Nimwegen E."/>
            <person name="Verardo R."/>
            <person name="Wei C.L."/>
            <person name="Yagi K."/>
            <person name="Yamanishi H."/>
            <person name="Zabarovsky E."/>
            <person name="Zhu S."/>
            <person name="Zimmer A."/>
            <person name="Hide W."/>
            <person name="Bult C."/>
            <person name="Grimmond S.M."/>
            <person name="Teasdale R.D."/>
            <person name="Liu E.T."/>
            <person name="Brusic V."/>
            <person name="Quackenbush J."/>
            <person name="Wahlestedt C."/>
            <person name="Mattick J.S."/>
            <person name="Hume D.A."/>
            <person name="Kai C."/>
            <person name="Sasaki D."/>
            <person name="Tomaru Y."/>
            <person name="Fukuda S."/>
            <person name="Kanamori-Katayama M."/>
            <person name="Suzuki M."/>
            <person name="Aoki J."/>
            <person name="Arakawa T."/>
            <person name="Iida J."/>
            <person name="Imamura K."/>
            <person name="Itoh M."/>
            <person name="Kato T."/>
            <person name="Kawaji H."/>
            <person name="Kawagashira N."/>
            <person name="Kawashima T."/>
            <person name="Kojima M."/>
            <person name="Kondo S."/>
            <person name="Konno H."/>
            <person name="Nakano K."/>
            <person name="Ninomiya N."/>
            <person name="Nishio T."/>
            <person name="Okada M."/>
            <person name="Plessy C."/>
            <person name="Shibata K."/>
            <person name="Shiraki T."/>
            <person name="Suzuki S."/>
            <person name="Tagami M."/>
            <person name="Waki K."/>
            <person name="Watahiki A."/>
            <person name="Okamura-Oho Y."/>
            <person name="Suzuki H."/>
            <person name="Kawai J."/>
            <person name="Hayashizaki Y."/>
        </authorList>
    </citation>
    <scope>NUCLEOTIDE SEQUENCE [LARGE SCALE MRNA]</scope>
    <source>
        <strain>C57BL/6J</strain>
        <tissue>Bone marrow</tissue>
        <tissue>Placenta</tissue>
        <tissue>Thymus</tissue>
    </source>
</reference>
<reference key="3">
    <citation type="journal article" date="2003" name="Dev. Cell">
        <title>Specific regulation of the adaptor protein complex AP-3 by the Arf GAP AGAP1.</title>
        <authorList>
            <person name="Nie Z."/>
            <person name="Boehm M."/>
            <person name="Boja E.S."/>
            <person name="Vass W.C."/>
            <person name="Bonifacino J.S."/>
            <person name="Fales H.M."/>
            <person name="Randazzo P.A."/>
        </authorList>
    </citation>
    <scope>INTERACTION WITH AGAP1</scope>
</reference>
<reference key="4">
    <citation type="journal article" date="2010" name="Cell">
        <title>A tissue-specific atlas of mouse protein phosphorylation and expression.</title>
        <authorList>
            <person name="Huttlin E.L."/>
            <person name="Jedrychowski M.P."/>
            <person name="Elias J.E."/>
            <person name="Goswami T."/>
            <person name="Rad R."/>
            <person name="Beausoleil S.A."/>
            <person name="Villen J."/>
            <person name="Haas W."/>
            <person name="Sowa M.E."/>
            <person name="Gygi S.P."/>
        </authorList>
    </citation>
    <scope>IDENTIFICATION BY MASS SPECTROMETRY [LARGE SCALE ANALYSIS]</scope>
    <source>
        <tissue>Brain</tissue>
        <tissue>Kidney</tissue>
        <tissue>Liver</tissue>
        <tissue>Lung</tissue>
        <tissue>Spleen</tissue>
    </source>
</reference>
<reference key="5">
    <citation type="journal article" date="2011" name="Mol. Biol. Cell">
        <title>The schizophrenia susceptibility factor dysbindin and its associated complex sort cargoes from cell bodies to the synapse.</title>
        <authorList>
            <person name="Larimore J."/>
            <person name="Tornieri K."/>
            <person name="Ryder P.V."/>
            <person name="Gokhale A."/>
            <person name="Zlatic S.A."/>
            <person name="Craige B."/>
            <person name="Lee J.D."/>
            <person name="Talbot K."/>
            <person name="Pare J.F."/>
            <person name="Smith Y."/>
            <person name="Faundez V."/>
        </authorList>
    </citation>
    <scope>FUNCTION</scope>
    <scope>ASSOCIATION WITH THE BLOC-1 COMPLEX</scope>
</reference>